<keyword id="KW-0378">Hydrolase</keyword>
<keyword id="KW-0479">Metal-binding</keyword>
<keyword id="KW-0546">Nucleotide metabolism</keyword>
<keyword id="KW-1185">Reference proteome</keyword>
<keyword id="KW-0862">Zinc</keyword>
<protein>
    <recommendedName>
        <fullName evidence="1">Adenosine deaminase</fullName>
        <ecNumber evidence="1">3.5.4.4</ecNumber>
    </recommendedName>
    <alternativeName>
        <fullName evidence="1">Adenosine aminohydrolase</fullName>
    </alternativeName>
</protein>
<name>ADD_SHIFL</name>
<sequence>MIDTTLPLTDIHRHLDGNIRPQTILELGRQYNISLPAQSLETLIPHVQVIANEPDLVSFLTKLDWGVKVLASLDACRRVAFENIEDAARNGLRYVELRFSPGYMAMAHKLPVAGVVEAVIDGVREGCRTFGVQAKLIGIMSRTFGEAACQQELEAFLAHRDQITALDLAGDELGFPGSLFLSHFNRARDAGWHITVHAGEAAGPESIWQAIRELGAERIGHGVKAIEDRALMDFLAEQQIGIESCLTSNIQTSTVAELAAHPLKTFLEHGIRASINTDDPGVQGVDIIHEYTVAAPAAGLSREQIRQAQINGLEMAFLSAEEKRALREKVAAK</sequence>
<dbReference type="EC" id="3.5.4.4" evidence="1"/>
<dbReference type="EMBL" id="AE005674">
    <property type="protein sequence ID" value="AAN43230.1"/>
    <property type="molecule type" value="Genomic_DNA"/>
</dbReference>
<dbReference type="EMBL" id="AE014073">
    <property type="protein sequence ID" value="AAP17116.1"/>
    <property type="molecule type" value="Genomic_DNA"/>
</dbReference>
<dbReference type="RefSeq" id="NP_707523.1">
    <property type="nucleotide sequence ID" value="NC_004337.2"/>
</dbReference>
<dbReference type="RefSeq" id="WP_000567518.1">
    <property type="nucleotide sequence ID" value="NZ_WPGW01000065.1"/>
</dbReference>
<dbReference type="SMR" id="Q83RC0"/>
<dbReference type="STRING" id="198214.SF1648"/>
<dbReference type="PaxDb" id="198214-SF1648"/>
<dbReference type="GeneID" id="1024851"/>
<dbReference type="KEGG" id="sfl:SF1648"/>
<dbReference type="KEGG" id="sfx:S1780"/>
<dbReference type="PATRIC" id="fig|198214.7.peg.1944"/>
<dbReference type="HOGENOM" id="CLU_039228_0_2_6"/>
<dbReference type="Proteomes" id="UP000001006">
    <property type="component" value="Chromosome"/>
</dbReference>
<dbReference type="Proteomes" id="UP000002673">
    <property type="component" value="Chromosome"/>
</dbReference>
<dbReference type="GO" id="GO:0005829">
    <property type="term" value="C:cytosol"/>
    <property type="evidence" value="ECO:0007669"/>
    <property type="project" value="TreeGrafter"/>
</dbReference>
<dbReference type="GO" id="GO:0046936">
    <property type="term" value="F:2'-deoxyadenosine deaminase activity"/>
    <property type="evidence" value="ECO:0007669"/>
    <property type="project" value="RHEA"/>
</dbReference>
<dbReference type="GO" id="GO:0004000">
    <property type="term" value="F:adenosine deaminase activity"/>
    <property type="evidence" value="ECO:0007669"/>
    <property type="project" value="UniProtKB-UniRule"/>
</dbReference>
<dbReference type="GO" id="GO:0008270">
    <property type="term" value="F:zinc ion binding"/>
    <property type="evidence" value="ECO:0007669"/>
    <property type="project" value="UniProtKB-UniRule"/>
</dbReference>
<dbReference type="GO" id="GO:0006154">
    <property type="term" value="P:adenosine catabolic process"/>
    <property type="evidence" value="ECO:0007669"/>
    <property type="project" value="TreeGrafter"/>
</dbReference>
<dbReference type="GO" id="GO:0043103">
    <property type="term" value="P:hypoxanthine salvage"/>
    <property type="evidence" value="ECO:0007669"/>
    <property type="project" value="TreeGrafter"/>
</dbReference>
<dbReference type="GO" id="GO:0046103">
    <property type="term" value="P:inosine biosynthetic process"/>
    <property type="evidence" value="ECO:0007669"/>
    <property type="project" value="TreeGrafter"/>
</dbReference>
<dbReference type="GO" id="GO:0009117">
    <property type="term" value="P:nucleotide metabolic process"/>
    <property type="evidence" value="ECO:0007669"/>
    <property type="project" value="UniProtKB-KW"/>
</dbReference>
<dbReference type="GO" id="GO:0009168">
    <property type="term" value="P:purine ribonucleoside monophosphate biosynthetic process"/>
    <property type="evidence" value="ECO:0007669"/>
    <property type="project" value="UniProtKB-UniRule"/>
</dbReference>
<dbReference type="CDD" id="cd01320">
    <property type="entry name" value="ADA"/>
    <property type="match status" value="1"/>
</dbReference>
<dbReference type="FunFam" id="3.20.20.140:FF:000009">
    <property type="entry name" value="Adenosine deaminase"/>
    <property type="match status" value="1"/>
</dbReference>
<dbReference type="Gene3D" id="3.20.20.140">
    <property type="entry name" value="Metal-dependent hydrolases"/>
    <property type="match status" value="1"/>
</dbReference>
<dbReference type="HAMAP" id="MF_00540">
    <property type="entry name" value="A_deaminase"/>
    <property type="match status" value="1"/>
</dbReference>
<dbReference type="InterPro" id="IPR006650">
    <property type="entry name" value="A/AMP_deam_AS"/>
</dbReference>
<dbReference type="InterPro" id="IPR028893">
    <property type="entry name" value="A_deaminase"/>
</dbReference>
<dbReference type="InterPro" id="IPR001365">
    <property type="entry name" value="A_deaminase_dom"/>
</dbReference>
<dbReference type="InterPro" id="IPR006330">
    <property type="entry name" value="Ado/ade_deaminase"/>
</dbReference>
<dbReference type="InterPro" id="IPR032466">
    <property type="entry name" value="Metal_Hydrolase"/>
</dbReference>
<dbReference type="NCBIfam" id="TIGR01430">
    <property type="entry name" value="aden_deam"/>
    <property type="match status" value="1"/>
</dbReference>
<dbReference type="NCBIfam" id="NF006846">
    <property type="entry name" value="PRK09358.1-1"/>
    <property type="match status" value="1"/>
</dbReference>
<dbReference type="PANTHER" id="PTHR11409">
    <property type="entry name" value="ADENOSINE DEAMINASE"/>
    <property type="match status" value="1"/>
</dbReference>
<dbReference type="PANTHER" id="PTHR11409:SF43">
    <property type="entry name" value="ADENOSINE DEAMINASE"/>
    <property type="match status" value="1"/>
</dbReference>
<dbReference type="Pfam" id="PF00962">
    <property type="entry name" value="A_deaminase"/>
    <property type="match status" value="1"/>
</dbReference>
<dbReference type="SUPFAM" id="SSF51556">
    <property type="entry name" value="Metallo-dependent hydrolases"/>
    <property type="match status" value="1"/>
</dbReference>
<dbReference type="PROSITE" id="PS00485">
    <property type="entry name" value="A_DEAMINASE"/>
    <property type="match status" value="1"/>
</dbReference>
<organism>
    <name type="scientific">Shigella flexneri</name>
    <dbReference type="NCBI Taxonomy" id="623"/>
    <lineage>
        <taxon>Bacteria</taxon>
        <taxon>Pseudomonadati</taxon>
        <taxon>Pseudomonadota</taxon>
        <taxon>Gammaproteobacteria</taxon>
        <taxon>Enterobacterales</taxon>
        <taxon>Enterobacteriaceae</taxon>
        <taxon>Shigella</taxon>
    </lineage>
</organism>
<comment type="function">
    <text evidence="1">Catalyzes the hydrolytic deamination of adenosine and 2-deoxyadenosine.</text>
</comment>
<comment type="catalytic activity">
    <reaction evidence="1">
        <text>adenosine + H2O + H(+) = inosine + NH4(+)</text>
        <dbReference type="Rhea" id="RHEA:24408"/>
        <dbReference type="ChEBI" id="CHEBI:15377"/>
        <dbReference type="ChEBI" id="CHEBI:15378"/>
        <dbReference type="ChEBI" id="CHEBI:16335"/>
        <dbReference type="ChEBI" id="CHEBI:17596"/>
        <dbReference type="ChEBI" id="CHEBI:28938"/>
        <dbReference type="EC" id="3.5.4.4"/>
    </reaction>
    <physiologicalReaction direction="left-to-right" evidence="1">
        <dbReference type="Rhea" id="RHEA:24409"/>
    </physiologicalReaction>
</comment>
<comment type="catalytic activity">
    <reaction evidence="1">
        <text>2'-deoxyadenosine + H2O + H(+) = 2'-deoxyinosine + NH4(+)</text>
        <dbReference type="Rhea" id="RHEA:28190"/>
        <dbReference type="ChEBI" id="CHEBI:15377"/>
        <dbReference type="ChEBI" id="CHEBI:15378"/>
        <dbReference type="ChEBI" id="CHEBI:17256"/>
        <dbReference type="ChEBI" id="CHEBI:28938"/>
        <dbReference type="ChEBI" id="CHEBI:28997"/>
        <dbReference type="EC" id="3.5.4.4"/>
    </reaction>
    <physiologicalReaction direction="left-to-right" evidence="1">
        <dbReference type="Rhea" id="RHEA:28191"/>
    </physiologicalReaction>
</comment>
<comment type="cofactor">
    <cofactor evidence="1">
        <name>Zn(2+)</name>
        <dbReference type="ChEBI" id="CHEBI:29105"/>
    </cofactor>
    <text evidence="1">Binds 1 zinc ion per subunit.</text>
</comment>
<comment type="similarity">
    <text evidence="1">Belongs to the metallo-dependent hydrolases superfamily. Adenosine and AMP deaminases family. Adenosine deaminase subfamily.</text>
</comment>
<reference key="1">
    <citation type="journal article" date="2002" name="Nucleic Acids Res.">
        <title>Genome sequence of Shigella flexneri 2a: insights into pathogenicity through comparison with genomes of Escherichia coli K12 and O157.</title>
        <authorList>
            <person name="Jin Q."/>
            <person name="Yuan Z."/>
            <person name="Xu J."/>
            <person name="Wang Y."/>
            <person name="Shen Y."/>
            <person name="Lu W."/>
            <person name="Wang J."/>
            <person name="Liu H."/>
            <person name="Yang J."/>
            <person name="Yang F."/>
            <person name="Zhang X."/>
            <person name="Zhang J."/>
            <person name="Yang G."/>
            <person name="Wu H."/>
            <person name="Qu D."/>
            <person name="Dong J."/>
            <person name="Sun L."/>
            <person name="Xue Y."/>
            <person name="Zhao A."/>
            <person name="Gao Y."/>
            <person name="Zhu J."/>
            <person name="Kan B."/>
            <person name="Ding K."/>
            <person name="Chen S."/>
            <person name="Cheng H."/>
            <person name="Yao Z."/>
            <person name="He B."/>
            <person name="Chen R."/>
            <person name="Ma D."/>
            <person name="Qiang B."/>
            <person name="Wen Y."/>
            <person name="Hou Y."/>
            <person name="Yu J."/>
        </authorList>
    </citation>
    <scope>NUCLEOTIDE SEQUENCE [LARGE SCALE GENOMIC DNA]</scope>
    <source>
        <strain>301 / Serotype 2a</strain>
    </source>
</reference>
<reference key="2">
    <citation type="journal article" date="2003" name="Infect. Immun.">
        <title>Complete genome sequence and comparative genomics of Shigella flexneri serotype 2a strain 2457T.</title>
        <authorList>
            <person name="Wei J."/>
            <person name="Goldberg M.B."/>
            <person name="Burland V."/>
            <person name="Venkatesan M.M."/>
            <person name="Deng W."/>
            <person name="Fournier G."/>
            <person name="Mayhew G.F."/>
            <person name="Plunkett G. III"/>
            <person name="Rose D.J."/>
            <person name="Darling A."/>
            <person name="Mau B."/>
            <person name="Perna N.T."/>
            <person name="Payne S.M."/>
            <person name="Runyen-Janecky L.J."/>
            <person name="Zhou S."/>
            <person name="Schwartz D.C."/>
            <person name="Blattner F.R."/>
        </authorList>
    </citation>
    <scope>NUCLEOTIDE SEQUENCE [LARGE SCALE GENOMIC DNA]</scope>
    <source>
        <strain>ATCC 700930 / 2457T / Serotype 2a</strain>
    </source>
</reference>
<evidence type="ECO:0000255" key="1">
    <source>
        <dbReference type="HAMAP-Rule" id="MF_00540"/>
    </source>
</evidence>
<proteinExistence type="inferred from homology"/>
<feature type="chain" id="PRO_0000194386" description="Adenosine deaminase">
    <location>
        <begin position="1"/>
        <end position="333"/>
    </location>
</feature>
<feature type="active site" description="Proton donor" evidence="1">
    <location>
        <position position="200"/>
    </location>
</feature>
<feature type="binding site" evidence="1">
    <location>
        <position position="12"/>
    </location>
    <ligand>
        <name>Zn(2+)</name>
        <dbReference type="ChEBI" id="CHEBI:29105"/>
        <note>catalytic</note>
    </ligand>
</feature>
<feature type="binding site" evidence="1">
    <location>
        <position position="14"/>
    </location>
    <ligand>
        <name>substrate</name>
    </ligand>
</feature>
<feature type="binding site" evidence="1">
    <location>
        <position position="14"/>
    </location>
    <ligand>
        <name>Zn(2+)</name>
        <dbReference type="ChEBI" id="CHEBI:29105"/>
        <note>catalytic</note>
    </ligand>
</feature>
<feature type="binding site" evidence="1">
    <location>
        <position position="16"/>
    </location>
    <ligand>
        <name>substrate</name>
    </ligand>
</feature>
<feature type="binding site" evidence="1">
    <location>
        <position position="170"/>
    </location>
    <ligand>
        <name>substrate</name>
    </ligand>
</feature>
<feature type="binding site" evidence="1">
    <location>
        <position position="197"/>
    </location>
    <ligand>
        <name>Zn(2+)</name>
        <dbReference type="ChEBI" id="CHEBI:29105"/>
        <note>catalytic</note>
    </ligand>
</feature>
<feature type="binding site" evidence="1">
    <location>
        <position position="278"/>
    </location>
    <ligand>
        <name>Zn(2+)</name>
        <dbReference type="ChEBI" id="CHEBI:29105"/>
        <note>catalytic</note>
    </ligand>
</feature>
<feature type="binding site" evidence="1">
    <location>
        <position position="279"/>
    </location>
    <ligand>
        <name>substrate</name>
    </ligand>
</feature>
<feature type="site" description="Important for catalytic activity" evidence="1">
    <location>
        <position position="221"/>
    </location>
</feature>
<gene>
    <name evidence="1" type="primary">add</name>
    <name type="ordered locus">SF1648</name>
    <name type="ordered locus">S1780</name>
</gene>
<accession>Q83RC0</accession>